<protein>
    <recommendedName>
        <fullName evidence="1">Serine--tRNA ligase</fullName>
        <ecNumber evidence="1">6.1.1.11</ecNumber>
    </recommendedName>
    <alternativeName>
        <fullName evidence="1">Seryl-tRNA synthetase</fullName>
        <shortName evidence="1">SerRS</shortName>
    </alternativeName>
    <alternativeName>
        <fullName evidence="1">Seryl-tRNA(Ser/Sec) synthetase</fullName>
    </alternativeName>
</protein>
<reference key="1">
    <citation type="journal article" date="2008" name="J. Bacteriol.">
        <title>Complete genome sequence of Neisseria gonorrhoeae NCCP11945.</title>
        <authorList>
            <person name="Chung G.T."/>
            <person name="Yoo J.S."/>
            <person name="Oh H.B."/>
            <person name="Lee Y.S."/>
            <person name="Cha S.H."/>
            <person name="Kim S.J."/>
            <person name="Yoo C.K."/>
        </authorList>
    </citation>
    <scope>NUCLEOTIDE SEQUENCE [LARGE SCALE GENOMIC DNA]</scope>
    <source>
        <strain>NCCP11945</strain>
    </source>
</reference>
<sequence>MLDIQLLRSNTAAVAERLARRGYDFDTARFDALEERRKSVQVKTEELQASRNSISKQIGALKGQGKHEEAQAAMDQVAQIKTDLEQAAADLDAVQKELDAWLLSIPNLPHESVPPGKDETENVEVRKVGTPREFDFEIKDHVDLGEPLGLDFEGGAKLSGARFTVMRGQIARLHRALAQFMLDTHTLQHGYTEHYTPYIVDDTTLQGTGQLPKFAEDLFHVTRGGDETKTTQYLIPTAEVTLTNTVAGSIIPSEQLPLKLTAHSPCFRSEAGSYGKDTRGLIRQHQFDKVEMVQIVHPEKSYGALEEMVGHAENILKALELPYRVITLCTGDMGFSAAKTYDLEVWVPAQNTYREISSCSNCEDFQARRMKARFKDENGKNRLVHTLNGSGLAVGRTLVAVLENHQNADGSINIPAALQPYMGGVTKLEVK</sequence>
<evidence type="ECO:0000255" key="1">
    <source>
        <dbReference type="HAMAP-Rule" id="MF_00176"/>
    </source>
</evidence>
<feature type="chain" id="PRO_1000098100" description="Serine--tRNA ligase">
    <location>
        <begin position="1"/>
        <end position="431"/>
    </location>
</feature>
<feature type="binding site" evidence="1">
    <location>
        <begin position="237"/>
        <end position="239"/>
    </location>
    <ligand>
        <name>L-serine</name>
        <dbReference type="ChEBI" id="CHEBI:33384"/>
    </ligand>
</feature>
<feature type="binding site" evidence="1">
    <location>
        <begin position="268"/>
        <end position="270"/>
    </location>
    <ligand>
        <name>ATP</name>
        <dbReference type="ChEBI" id="CHEBI:30616"/>
    </ligand>
</feature>
<feature type="binding site" evidence="1">
    <location>
        <position position="291"/>
    </location>
    <ligand>
        <name>L-serine</name>
        <dbReference type="ChEBI" id="CHEBI:33384"/>
    </ligand>
</feature>
<feature type="binding site" evidence="1">
    <location>
        <begin position="355"/>
        <end position="358"/>
    </location>
    <ligand>
        <name>ATP</name>
        <dbReference type="ChEBI" id="CHEBI:30616"/>
    </ligand>
</feature>
<feature type="binding site" evidence="1">
    <location>
        <position position="390"/>
    </location>
    <ligand>
        <name>L-serine</name>
        <dbReference type="ChEBI" id="CHEBI:33384"/>
    </ligand>
</feature>
<keyword id="KW-0030">Aminoacyl-tRNA synthetase</keyword>
<keyword id="KW-0067">ATP-binding</keyword>
<keyword id="KW-0963">Cytoplasm</keyword>
<keyword id="KW-0436">Ligase</keyword>
<keyword id="KW-0547">Nucleotide-binding</keyword>
<keyword id="KW-0648">Protein biosynthesis</keyword>
<gene>
    <name evidence="1" type="primary">serS</name>
    <name type="ordered locus">NGK_1560</name>
</gene>
<dbReference type="EC" id="6.1.1.11" evidence="1"/>
<dbReference type="EMBL" id="CP001050">
    <property type="protein sequence ID" value="ACF30214.1"/>
    <property type="molecule type" value="Genomic_DNA"/>
</dbReference>
<dbReference type="RefSeq" id="WP_003691671.1">
    <property type="nucleotide sequence ID" value="NC_011035.1"/>
</dbReference>
<dbReference type="SMR" id="B4RN50"/>
<dbReference type="GeneID" id="66753537"/>
<dbReference type="KEGG" id="ngk:NGK_1560"/>
<dbReference type="HOGENOM" id="CLU_023797_1_1_4"/>
<dbReference type="UniPathway" id="UPA00906">
    <property type="reaction ID" value="UER00895"/>
</dbReference>
<dbReference type="Proteomes" id="UP000002564">
    <property type="component" value="Chromosome"/>
</dbReference>
<dbReference type="GO" id="GO:0005737">
    <property type="term" value="C:cytoplasm"/>
    <property type="evidence" value="ECO:0007669"/>
    <property type="project" value="UniProtKB-SubCell"/>
</dbReference>
<dbReference type="GO" id="GO:0005524">
    <property type="term" value="F:ATP binding"/>
    <property type="evidence" value="ECO:0007669"/>
    <property type="project" value="UniProtKB-UniRule"/>
</dbReference>
<dbReference type="GO" id="GO:0004828">
    <property type="term" value="F:serine-tRNA ligase activity"/>
    <property type="evidence" value="ECO:0007669"/>
    <property type="project" value="UniProtKB-UniRule"/>
</dbReference>
<dbReference type="GO" id="GO:0016260">
    <property type="term" value="P:selenocysteine biosynthetic process"/>
    <property type="evidence" value="ECO:0007669"/>
    <property type="project" value="UniProtKB-UniRule"/>
</dbReference>
<dbReference type="GO" id="GO:0006434">
    <property type="term" value="P:seryl-tRNA aminoacylation"/>
    <property type="evidence" value="ECO:0007669"/>
    <property type="project" value="UniProtKB-UniRule"/>
</dbReference>
<dbReference type="CDD" id="cd00770">
    <property type="entry name" value="SerRS_core"/>
    <property type="match status" value="1"/>
</dbReference>
<dbReference type="Gene3D" id="3.30.930.10">
    <property type="entry name" value="Bira Bifunctional Protein, Domain 2"/>
    <property type="match status" value="1"/>
</dbReference>
<dbReference type="Gene3D" id="1.10.287.40">
    <property type="entry name" value="Serine-tRNA synthetase, tRNA binding domain"/>
    <property type="match status" value="1"/>
</dbReference>
<dbReference type="HAMAP" id="MF_00176">
    <property type="entry name" value="Ser_tRNA_synth_type1"/>
    <property type="match status" value="1"/>
</dbReference>
<dbReference type="InterPro" id="IPR002314">
    <property type="entry name" value="aa-tRNA-synt_IIb"/>
</dbReference>
<dbReference type="InterPro" id="IPR006195">
    <property type="entry name" value="aa-tRNA-synth_II"/>
</dbReference>
<dbReference type="InterPro" id="IPR045864">
    <property type="entry name" value="aa-tRNA-synth_II/BPL/LPL"/>
</dbReference>
<dbReference type="InterPro" id="IPR002317">
    <property type="entry name" value="Ser-tRNA-ligase_type_1"/>
</dbReference>
<dbReference type="InterPro" id="IPR015866">
    <property type="entry name" value="Ser-tRNA-synth_1_N"/>
</dbReference>
<dbReference type="InterPro" id="IPR042103">
    <property type="entry name" value="SerRS_1_N_sf"/>
</dbReference>
<dbReference type="InterPro" id="IPR033729">
    <property type="entry name" value="SerRS_core"/>
</dbReference>
<dbReference type="InterPro" id="IPR010978">
    <property type="entry name" value="tRNA-bd_arm"/>
</dbReference>
<dbReference type="NCBIfam" id="TIGR00414">
    <property type="entry name" value="serS"/>
    <property type="match status" value="1"/>
</dbReference>
<dbReference type="PANTHER" id="PTHR43697:SF1">
    <property type="entry name" value="SERINE--TRNA LIGASE"/>
    <property type="match status" value="1"/>
</dbReference>
<dbReference type="PANTHER" id="PTHR43697">
    <property type="entry name" value="SERYL-TRNA SYNTHETASE"/>
    <property type="match status" value="1"/>
</dbReference>
<dbReference type="Pfam" id="PF02403">
    <property type="entry name" value="Seryl_tRNA_N"/>
    <property type="match status" value="1"/>
</dbReference>
<dbReference type="Pfam" id="PF00587">
    <property type="entry name" value="tRNA-synt_2b"/>
    <property type="match status" value="1"/>
</dbReference>
<dbReference type="PIRSF" id="PIRSF001529">
    <property type="entry name" value="Ser-tRNA-synth_IIa"/>
    <property type="match status" value="1"/>
</dbReference>
<dbReference type="PRINTS" id="PR00981">
    <property type="entry name" value="TRNASYNTHSER"/>
</dbReference>
<dbReference type="SUPFAM" id="SSF55681">
    <property type="entry name" value="Class II aaRS and biotin synthetases"/>
    <property type="match status" value="1"/>
</dbReference>
<dbReference type="SUPFAM" id="SSF46589">
    <property type="entry name" value="tRNA-binding arm"/>
    <property type="match status" value="1"/>
</dbReference>
<dbReference type="PROSITE" id="PS50862">
    <property type="entry name" value="AA_TRNA_LIGASE_II"/>
    <property type="match status" value="1"/>
</dbReference>
<proteinExistence type="inferred from homology"/>
<organism>
    <name type="scientific">Neisseria gonorrhoeae (strain NCCP11945)</name>
    <dbReference type="NCBI Taxonomy" id="521006"/>
    <lineage>
        <taxon>Bacteria</taxon>
        <taxon>Pseudomonadati</taxon>
        <taxon>Pseudomonadota</taxon>
        <taxon>Betaproteobacteria</taxon>
        <taxon>Neisseriales</taxon>
        <taxon>Neisseriaceae</taxon>
        <taxon>Neisseria</taxon>
    </lineage>
</organism>
<name>SYS_NEIG2</name>
<accession>B4RN50</accession>
<comment type="function">
    <text evidence="1">Catalyzes the attachment of serine to tRNA(Ser). Is also able to aminoacylate tRNA(Sec) with serine, to form the misacylated tRNA L-seryl-tRNA(Sec), which will be further converted into selenocysteinyl-tRNA(Sec).</text>
</comment>
<comment type="catalytic activity">
    <reaction evidence="1">
        <text>tRNA(Ser) + L-serine + ATP = L-seryl-tRNA(Ser) + AMP + diphosphate + H(+)</text>
        <dbReference type="Rhea" id="RHEA:12292"/>
        <dbReference type="Rhea" id="RHEA-COMP:9669"/>
        <dbReference type="Rhea" id="RHEA-COMP:9703"/>
        <dbReference type="ChEBI" id="CHEBI:15378"/>
        <dbReference type="ChEBI" id="CHEBI:30616"/>
        <dbReference type="ChEBI" id="CHEBI:33019"/>
        <dbReference type="ChEBI" id="CHEBI:33384"/>
        <dbReference type="ChEBI" id="CHEBI:78442"/>
        <dbReference type="ChEBI" id="CHEBI:78533"/>
        <dbReference type="ChEBI" id="CHEBI:456215"/>
        <dbReference type="EC" id="6.1.1.11"/>
    </reaction>
</comment>
<comment type="catalytic activity">
    <reaction evidence="1">
        <text>tRNA(Sec) + L-serine + ATP = L-seryl-tRNA(Sec) + AMP + diphosphate + H(+)</text>
        <dbReference type="Rhea" id="RHEA:42580"/>
        <dbReference type="Rhea" id="RHEA-COMP:9742"/>
        <dbReference type="Rhea" id="RHEA-COMP:10128"/>
        <dbReference type="ChEBI" id="CHEBI:15378"/>
        <dbReference type="ChEBI" id="CHEBI:30616"/>
        <dbReference type="ChEBI" id="CHEBI:33019"/>
        <dbReference type="ChEBI" id="CHEBI:33384"/>
        <dbReference type="ChEBI" id="CHEBI:78442"/>
        <dbReference type="ChEBI" id="CHEBI:78533"/>
        <dbReference type="ChEBI" id="CHEBI:456215"/>
        <dbReference type="EC" id="6.1.1.11"/>
    </reaction>
</comment>
<comment type="pathway">
    <text evidence="1">Aminoacyl-tRNA biosynthesis; selenocysteinyl-tRNA(Sec) biosynthesis; L-seryl-tRNA(Sec) from L-serine and tRNA(Sec): step 1/1.</text>
</comment>
<comment type="subunit">
    <text evidence="1">Homodimer. The tRNA molecule binds across the dimer.</text>
</comment>
<comment type="subcellular location">
    <subcellularLocation>
        <location evidence="1">Cytoplasm</location>
    </subcellularLocation>
</comment>
<comment type="domain">
    <text evidence="1">Consists of two distinct domains, a catalytic core and a N-terminal extension that is involved in tRNA binding.</text>
</comment>
<comment type="similarity">
    <text evidence="1">Belongs to the class-II aminoacyl-tRNA synthetase family. Type-1 seryl-tRNA synthetase subfamily.</text>
</comment>